<evidence type="ECO:0000255" key="1">
    <source>
        <dbReference type="HAMAP-Rule" id="MF_01018"/>
    </source>
</evidence>
<proteinExistence type="inferred from homology"/>
<accession>Q0K686</accession>
<comment type="function">
    <text evidence="1">Catalyzes the condensation of ATP and 5-phosphoribose 1-diphosphate to form N'-(5'-phosphoribosyl)-ATP (PR-ATP). Has a crucial role in the pathway because the rate of histidine biosynthesis seems to be controlled primarily by regulation of HisG enzymatic activity.</text>
</comment>
<comment type="catalytic activity">
    <reaction evidence="1">
        <text>1-(5-phospho-beta-D-ribosyl)-ATP + diphosphate = 5-phospho-alpha-D-ribose 1-diphosphate + ATP</text>
        <dbReference type="Rhea" id="RHEA:18473"/>
        <dbReference type="ChEBI" id="CHEBI:30616"/>
        <dbReference type="ChEBI" id="CHEBI:33019"/>
        <dbReference type="ChEBI" id="CHEBI:58017"/>
        <dbReference type="ChEBI" id="CHEBI:73183"/>
        <dbReference type="EC" id="2.4.2.17"/>
    </reaction>
</comment>
<comment type="pathway">
    <text evidence="1">Amino-acid biosynthesis; L-histidine biosynthesis; L-histidine from 5-phospho-alpha-D-ribose 1-diphosphate: step 1/9.</text>
</comment>
<comment type="subunit">
    <text evidence="1">Heteromultimer composed of HisG and HisZ subunits.</text>
</comment>
<comment type="subcellular location">
    <subcellularLocation>
        <location evidence="1">Cytoplasm</location>
    </subcellularLocation>
</comment>
<comment type="domain">
    <text>Lacks the C-terminal regulatory region which is replaced by HisZ.</text>
</comment>
<comment type="similarity">
    <text evidence="1">Belongs to the ATP phosphoribosyltransferase family. Short subfamily.</text>
</comment>
<dbReference type="EC" id="2.4.2.17" evidence="1"/>
<dbReference type="EMBL" id="AM260479">
    <property type="protein sequence ID" value="CAJ94485.1"/>
    <property type="molecule type" value="Genomic_DNA"/>
</dbReference>
<dbReference type="RefSeq" id="WP_010812333.1">
    <property type="nucleotide sequence ID" value="NZ_CP039287.1"/>
</dbReference>
<dbReference type="SMR" id="Q0K686"/>
<dbReference type="STRING" id="381666.H16_A3417"/>
<dbReference type="GeneID" id="34308081"/>
<dbReference type="KEGG" id="reh:H16_A3417"/>
<dbReference type="eggNOG" id="COG0040">
    <property type="taxonomic scope" value="Bacteria"/>
</dbReference>
<dbReference type="HOGENOM" id="CLU_038115_2_0_4"/>
<dbReference type="OrthoDB" id="9801867at2"/>
<dbReference type="UniPathway" id="UPA00031">
    <property type="reaction ID" value="UER00006"/>
</dbReference>
<dbReference type="Proteomes" id="UP000008210">
    <property type="component" value="Chromosome 1"/>
</dbReference>
<dbReference type="GO" id="GO:0005737">
    <property type="term" value="C:cytoplasm"/>
    <property type="evidence" value="ECO:0007669"/>
    <property type="project" value="UniProtKB-SubCell"/>
</dbReference>
<dbReference type="GO" id="GO:0005524">
    <property type="term" value="F:ATP binding"/>
    <property type="evidence" value="ECO:0007669"/>
    <property type="project" value="UniProtKB-KW"/>
</dbReference>
<dbReference type="GO" id="GO:0003879">
    <property type="term" value="F:ATP phosphoribosyltransferase activity"/>
    <property type="evidence" value="ECO:0007669"/>
    <property type="project" value="UniProtKB-UniRule"/>
</dbReference>
<dbReference type="GO" id="GO:0000105">
    <property type="term" value="P:L-histidine biosynthetic process"/>
    <property type="evidence" value="ECO:0007669"/>
    <property type="project" value="UniProtKB-UniRule"/>
</dbReference>
<dbReference type="CDD" id="cd13595">
    <property type="entry name" value="PBP2_HisGs"/>
    <property type="match status" value="1"/>
</dbReference>
<dbReference type="FunFam" id="3.40.190.10:FF:000011">
    <property type="entry name" value="ATP phosphoribosyltransferase"/>
    <property type="match status" value="1"/>
</dbReference>
<dbReference type="Gene3D" id="3.40.190.10">
    <property type="entry name" value="Periplasmic binding protein-like II"/>
    <property type="match status" value="2"/>
</dbReference>
<dbReference type="HAMAP" id="MF_01018">
    <property type="entry name" value="HisG_Short"/>
    <property type="match status" value="1"/>
</dbReference>
<dbReference type="InterPro" id="IPR013820">
    <property type="entry name" value="ATP_PRibTrfase_cat"/>
</dbReference>
<dbReference type="InterPro" id="IPR018198">
    <property type="entry name" value="ATP_PRibTrfase_CS"/>
</dbReference>
<dbReference type="InterPro" id="IPR001348">
    <property type="entry name" value="ATP_PRibTrfase_HisG"/>
</dbReference>
<dbReference type="InterPro" id="IPR024893">
    <property type="entry name" value="ATP_PRibTrfase_HisG_short"/>
</dbReference>
<dbReference type="NCBIfam" id="TIGR00070">
    <property type="entry name" value="hisG"/>
    <property type="match status" value="1"/>
</dbReference>
<dbReference type="PANTHER" id="PTHR21403:SF8">
    <property type="entry name" value="ATP PHOSPHORIBOSYLTRANSFERASE"/>
    <property type="match status" value="1"/>
</dbReference>
<dbReference type="PANTHER" id="PTHR21403">
    <property type="entry name" value="ATP PHOSPHORIBOSYLTRANSFERASE ATP-PRTASE"/>
    <property type="match status" value="1"/>
</dbReference>
<dbReference type="Pfam" id="PF01634">
    <property type="entry name" value="HisG"/>
    <property type="match status" value="1"/>
</dbReference>
<dbReference type="SUPFAM" id="SSF53850">
    <property type="entry name" value="Periplasmic binding protein-like II"/>
    <property type="match status" value="1"/>
</dbReference>
<dbReference type="PROSITE" id="PS01316">
    <property type="entry name" value="ATP_P_PHORIBOSYLTR"/>
    <property type="match status" value="1"/>
</dbReference>
<sequence>MSPTFNASPNQLTLALSKGRIFTETLPLLEAAGIRVTEDPETSRKLILPTSDPAVRVVIVRASDVPTYVQYGAADFGVAGKDVLMESGMAGLYAPIDLNIARCRMSVAVPAGFDYANAVRQGARLAVATKYVQTAREHFAKKGVHVDLIKLYGSMELGPLVGLSDAIVDLVSTGSTLRANNLVEVEEIVQISSRLVVNQAALKLKRERLAPILDAFERASAALA</sequence>
<name>HIS1_CUPNH</name>
<feature type="chain" id="PRO_1000063302" description="ATP phosphoribosyltransferase">
    <location>
        <begin position="1"/>
        <end position="224"/>
    </location>
</feature>
<organism>
    <name type="scientific">Cupriavidus necator (strain ATCC 17699 / DSM 428 / KCTC 22496 / NCIMB 10442 / H16 / Stanier 337)</name>
    <name type="common">Ralstonia eutropha</name>
    <dbReference type="NCBI Taxonomy" id="381666"/>
    <lineage>
        <taxon>Bacteria</taxon>
        <taxon>Pseudomonadati</taxon>
        <taxon>Pseudomonadota</taxon>
        <taxon>Betaproteobacteria</taxon>
        <taxon>Burkholderiales</taxon>
        <taxon>Burkholderiaceae</taxon>
        <taxon>Cupriavidus</taxon>
    </lineage>
</organism>
<keyword id="KW-0028">Amino-acid biosynthesis</keyword>
<keyword id="KW-0067">ATP-binding</keyword>
<keyword id="KW-0963">Cytoplasm</keyword>
<keyword id="KW-0328">Glycosyltransferase</keyword>
<keyword id="KW-0368">Histidine biosynthesis</keyword>
<keyword id="KW-0547">Nucleotide-binding</keyword>
<keyword id="KW-1185">Reference proteome</keyword>
<keyword id="KW-0808">Transferase</keyword>
<reference key="1">
    <citation type="journal article" date="2006" name="Nat. Biotechnol.">
        <title>Genome sequence of the bioplastic-producing 'Knallgas' bacterium Ralstonia eutropha H16.</title>
        <authorList>
            <person name="Pohlmann A."/>
            <person name="Fricke W.F."/>
            <person name="Reinecke F."/>
            <person name="Kusian B."/>
            <person name="Liesegang H."/>
            <person name="Cramm R."/>
            <person name="Eitinger T."/>
            <person name="Ewering C."/>
            <person name="Poetter M."/>
            <person name="Schwartz E."/>
            <person name="Strittmatter A."/>
            <person name="Voss I."/>
            <person name="Gottschalk G."/>
            <person name="Steinbuechel A."/>
            <person name="Friedrich B."/>
            <person name="Bowien B."/>
        </authorList>
    </citation>
    <scope>NUCLEOTIDE SEQUENCE [LARGE SCALE GENOMIC DNA]</scope>
    <source>
        <strain>ATCC 17699 / DSM 428 / KCTC 22496 / NCIMB 10442 / H16 / Stanier 337</strain>
    </source>
</reference>
<protein>
    <recommendedName>
        <fullName evidence="1">ATP phosphoribosyltransferase</fullName>
        <shortName evidence="1">ATP-PRT</shortName>
        <shortName evidence="1">ATP-PRTase</shortName>
        <ecNumber evidence="1">2.4.2.17</ecNumber>
    </recommendedName>
</protein>
<gene>
    <name evidence="1" type="primary">hisG</name>
    <name type="ordered locus">H16_A3417</name>
</gene>